<protein>
    <recommendedName>
        <fullName>Peroxidase 38</fullName>
        <shortName>Atperox P38</shortName>
        <ecNumber>1.11.1.7</ecNumber>
    </recommendedName>
</protein>
<keyword id="KW-0106">Calcium</keyword>
<keyword id="KW-1015">Disulfide bond</keyword>
<keyword id="KW-0325">Glycoprotein</keyword>
<keyword id="KW-0349">Heme</keyword>
<keyword id="KW-0376">Hydrogen peroxide</keyword>
<keyword id="KW-0408">Iron</keyword>
<keyword id="KW-0479">Metal-binding</keyword>
<keyword id="KW-0560">Oxidoreductase</keyword>
<keyword id="KW-0575">Peroxidase</keyword>
<keyword id="KW-0873">Pyrrolidone carboxylic acid</keyword>
<keyword id="KW-1185">Reference proteome</keyword>
<keyword id="KW-0964">Secreted</keyword>
<keyword id="KW-0732">Signal</keyword>
<keyword id="KW-0926">Vacuole</keyword>
<proteinExistence type="inferred from homology"/>
<dbReference type="EC" id="1.11.1.7"/>
<dbReference type="EMBL" id="AL161512">
    <property type="protein sequence ID" value="CAB78003.1"/>
    <property type="molecule type" value="Genomic_DNA"/>
</dbReference>
<dbReference type="EMBL" id="AL161813">
    <property type="protein sequence ID" value="CAB82114.1"/>
    <property type="molecule type" value="Genomic_DNA"/>
</dbReference>
<dbReference type="EMBL" id="CP002687">
    <property type="protein sequence ID" value="AEE82677.1"/>
    <property type="molecule type" value="Genomic_DNA"/>
</dbReference>
<dbReference type="PIR" id="C85088">
    <property type="entry name" value="C85088"/>
</dbReference>
<dbReference type="RefSeq" id="NP_192618.1">
    <property type="nucleotide sequence ID" value="NM_116948.2"/>
</dbReference>
<dbReference type="SMR" id="Q9LDA4"/>
<dbReference type="FunCoup" id="Q9LDA4">
    <property type="interactions" value="129"/>
</dbReference>
<dbReference type="STRING" id="3702.Q9LDA4"/>
<dbReference type="PeroxiBase" id="204">
    <property type="entry name" value="AtPrx38"/>
</dbReference>
<dbReference type="GlyCosmos" id="Q9LDA4">
    <property type="glycosylation" value="2 sites, No reported glycans"/>
</dbReference>
<dbReference type="GlyGen" id="Q9LDA4">
    <property type="glycosylation" value="2 sites"/>
</dbReference>
<dbReference type="MetOSite" id="Q9LDA4"/>
<dbReference type="PaxDb" id="3702-AT4G08780.1"/>
<dbReference type="ProteomicsDB" id="236396"/>
<dbReference type="EnsemblPlants" id="AT4G08780.1">
    <property type="protein sequence ID" value="AT4G08780.1"/>
    <property type="gene ID" value="AT4G08780"/>
</dbReference>
<dbReference type="GeneID" id="826448"/>
<dbReference type="Gramene" id="AT4G08780.1">
    <property type="protein sequence ID" value="AT4G08780.1"/>
    <property type="gene ID" value="AT4G08780"/>
</dbReference>
<dbReference type="KEGG" id="ath:AT4G08780"/>
<dbReference type="Araport" id="AT4G08780"/>
<dbReference type="TAIR" id="AT4G08780"/>
<dbReference type="eggNOG" id="ENOG502QVXS">
    <property type="taxonomic scope" value="Eukaryota"/>
</dbReference>
<dbReference type="HOGENOM" id="CLU_010543_0_1_1"/>
<dbReference type="InParanoid" id="Q9LDA4"/>
<dbReference type="OMA" id="NESVSYM"/>
<dbReference type="PhylomeDB" id="Q9LDA4"/>
<dbReference type="BioCyc" id="ARA:AT4G08780-MONOMER"/>
<dbReference type="PRO" id="PR:Q9LDA4"/>
<dbReference type="Proteomes" id="UP000006548">
    <property type="component" value="Chromosome 4"/>
</dbReference>
<dbReference type="ExpressionAtlas" id="Q9LDA4">
    <property type="expression patterns" value="baseline and differential"/>
</dbReference>
<dbReference type="GO" id="GO:0005576">
    <property type="term" value="C:extracellular region"/>
    <property type="evidence" value="ECO:0007669"/>
    <property type="project" value="UniProtKB-SubCell"/>
</dbReference>
<dbReference type="GO" id="GO:0000325">
    <property type="term" value="C:plant-type vacuole"/>
    <property type="evidence" value="ECO:0007005"/>
    <property type="project" value="TAIR"/>
</dbReference>
<dbReference type="GO" id="GO:0020037">
    <property type="term" value="F:heme binding"/>
    <property type="evidence" value="ECO:0007669"/>
    <property type="project" value="InterPro"/>
</dbReference>
<dbReference type="GO" id="GO:0140825">
    <property type="term" value="F:lactoperoxidase activity"/>
    <property type="evidence" value="ECO:0007669"/>
    <property type="project" value="UniProtKB-EC"/>
</dbReference>
<dbReference type="GO" id="GO:0046872">
    <property type="term" value="F:metal ion binding"/>
    <property type="evidence" value="ECO:0007669"/>
    <property type="project" value="UniProtKB-KW"/>
</dbReference>
<dbReference type="GO" id="GO:0042744">
    <property type="term" value="P:hydrogen peroxide catabolic process"/>
    <property type="evidence" value="ECO:0007669"/>
    <property type="project" value="UniProtKB-KW"/>
</dbReference>
<dbReference type="GO" id="GO:0006979">
    <property type="term" value="P:response to oxidative stress"/>
    <property type="evidence" value="ECO:0007669"/>
    <property type="project" value="InterPro"/>
</dbReference>
<dbReference type="CDD" id="cd00693">
    <property type="entry name" value="secretory_peroxidase"/>
    <property type="match status" value="1"/>
</dbReference>
<dbReference type="FunFam" id="1.10.420.10:FF:000001">
    <property type="entry name" value="Peroxidase"/>
    <property type="match status" value="1"/>
</dbReference>
<dbReference type="FunFam" id="1.10.520.10:FF:000001">
    <property type="entry name" value="Peroxidase"/>
    <property type="match status" value="1"/>
</dbReference>
<dbReference type="Gene3D" id="1.10.520.10">
    <property type="match status" value="1"/>
</dbReference>
<dbReference type="Gene3D" id="1.10.420.10">
    <property type="entry name" value="Peroxidase, domain 2"/>
    <property type="match status" value="1"/>
</dbReference>
<dbReference type="InterPro" id="IPR002016">
    <property type="entry name" value="Haem_peroxidase"/>
</dbReference>
<dbReference type="InterPro" id="IPR010255">
    <property type="entry name" value="Haem_peroxidase_sf"/>
</dbReference>
<dbReference type="InterPro" id="IPR000823">
    <property type="entry name" value="Peroxidase_pln"/>
</dbReference>
<dbReference type="InterPro" id="IPR019794">
    <property type="entry name" value="Peroxidases_AS"/>
</dbReference>
<dbReference type="InterPro" id="IPR019793">
    <property type="entry name" value="Peroxidases_heam-ligand_BS"/>
</dbReference>
<dbReference type="InterPro" id="IPR033905">
    <property type="entry name" value="Secretory_peroxidase"/>
</dbReference>
<dbReference type="PANTHER" id="PTHR31388:SF113">
    <property type="entry name" value="PEROXIDASE 37-RELATED"/>
    <property type="match status" value="1"/>
</dbReference>
<dbReference type="PANTHER" id="PTHR31388">
    <property type="entry name" value="PEROXIDASE 72-RELATED"/>
    <property type="match status" value="1"/>
</dbReference>
<dbReference type="Pfam" id="PF00141">
    <property type="entry name" value="peroxidase"/>
    <property type="match status" value="1"/>
</dbReference>
<dbReference type="PRINTS" id="PR00458">
    <property type="entry name" value="PEROXIDASE"/>
</dbReference>
<dbReference type="PRINTS" id="PR00461">
    <property type="entry name" value="PLPEROXIDASE"/>
</dbReference>
<dbReference type="SUPFAM" id="SSF48113">
    <property type="entry name" value="Heme-dependent peroxidases"/>
    <property type="match status" value="1"/>
</dbReference>
<dbReference type="PROSITE" id="PS00435">
    <property type="entry name" value="PEROXIDASE_1"/>
    <property type="match status" value="1"/>
</dbReference>
<dbReference type="PROSITE" id="PS00436">
    <property type="entry name" value="PEROXIDASE_2"/>
    <property type="match status" value="1"/>
</dbReference>
<dbReference type="PROSITE" id="PS50873">
    <property type="entry name" value="PEROXIDASE_4"/>
    <property type="match status" value="1"/>
</dbReference>
<name>PER38_ARATH</name>
<gene>
    <name type="primary">PER38</name>
    <name type="synonym">P38</name>
    <name type="ordered locus">At4g08780</name>
    <name type="ORF">T32A17.90</name>
</gene>
<evidence type="ECO:0000250" key="1">
    <source>
        <dbReference type="UniProtKB" id="Q42578"/>
    </source>
</evidence>
<evidence type="ECO:0000255" key="2"/>
<evidence type="ECO:0000255" key="3">
    <source>
        <dbReference type="PROSITE-ProRule" id="PRU00297"/>
    </source>
</evidence>
<evidence type="ECO:0000255" key="4">
    <source>
        <dbReference type="PROSITE-ProRule" id="PRU10012"/>
    </source>
</evidence>
<evidence type="ECO:0000305" key="5"/>
<reference key="1">
    <citation type="journal article" date="1999" name="Nature">
        <title>Sequence and analysis of chromosome 4 of the plant Arabidopsis thaliana.</title>
        <authorList>
            <person name="Mayer K.F.X."/>
            <person name="Schueller C."/>
            <person name="Wambutt R."/>
            <person name="Murphy G."/>
            <person name="Volckaert G."/>
            <person name="Pohl T."/>
            <person name="Duesterhoeft A."/>
            <person name="Stiekema W."/>
            <person name="Entian K.-D."/>
            <person name="Terryn N."/>
            <person name="Harris B."/>
            <person name="Ansorge W."/>
            <person name="Brandt P."/>
            <person name="Grivell L.A."/>
            <person name="Rieger M."/>
            <person name="Weichselgartner M."/>
            <person name="de Simone V."/>
            <person name="Obermaier B."/>
            <person name="Mache R."/>
            <person name="Mueller M."/>
            <person name="Kreis M."/>
            <person name="Delseny M."/>
            <person name="Puigdomenech P."/>
            <person name="Watson M."/>
            <person name="Schmidtheini T."/>
            <person name="Reichert B."/>
            <person name="Portetelle D."/>
            <person name="Perez-Alonso M."/>
            <person name="Boutry M."/>
            <person name="Bancroft I."/>
            <person name="Vos P."/>
            <person name="Hoheisel J."/>
            <person name="Zimmermann W."/>
            <person name="Wedler H."/>
            <person name="Ridley P."/>
            <person name="Langham S.-A."/>
            <person name="McCullagh B."/>
            <person name="Bilham L."/>
            <person name="Robben J."/>
            <person name="van der Schueren J."/>
            <person name="Grymonprez B."/>
            <person name="Chuang Y.-J."/>
            <person name="Vandenbussche F."/>
            <person name="Braeken M."/>
            <person name="Weltjens I."/>
            <person name="Voet M."/>
            <person name="Bastiaens I."/>
            <person name="Aert R."/>
            <person name="Defoor E."/>
            <person name="Weitzenegger T."/>
            <person name="Bothe G."/>
            <person name="Ramsperger U."/>
            <person name="Hilbert H."/>
            <person name="Braun M."/>
            <person name="Holzer E."/>
            <person name="Brandt A."/>
            <person name="Peters S."/>
            <person name="van Staveren M."/>
            <person name="Dirkse W."/>
            <person name="Mooijman P."/>
            <person name="Klein Lankhorst R."/>
            <person name="Rose M."/>
            <person name="Hauf J."/>
            <person name="Koetter P."/>
            <person name="Berneiser S."/>
            <person name="Hempel S."/>
            <person name="Feldpausch M."/>
            <person name="Lamberth S."/>
            <person name="Van den Daele H."/>
            <person name="De Keyser A."/>
            <person name="Buysshaert C."/>
            <person name="Gielen J."/>
            <person name="Villarroel R."/>
            <person name="De Clercq R."/>
            <person name="van Montagu M."/>
            <person name="Rogers J."/>
            <person name="Cronin A."/>
            <person name="Quail M.A."/>
            <person name="Bray-Allen S."/>
            <person name="Clark L."/>
            <person name="Doggett J."/>
            <person name="Hall S."/>
            <person name="Kay M."/>
            <person name="Lennard N."/>
            <person name="McLay K."/>
            <person name="Mayes R."/>
            <person name="Pettett A."/>
            <person name="Rajandream M.A."/>
            <person name="Lyne M."/>
            <person name="Benes V."/>
            <person name="Rechmann S."/>
            <person name="Borkova D."/>
            <person name="Bloecker H."/>
            <person name="Scharfe M."/>
            <person name="Grimm M."/>
            <person name="Loehnert T.-H."/>
            <person name="Dose S."/>
            <person name="de Haan M."/>
            <person name="Maarse A.C."/>
            <person name="Schaefer M."/>
            <person name="Mueller-Auer S."/>
            <person name="Gabel C."/>
            <person name="Fuchs M."/>
            <person name="Fartmann B."/>
            <person name="Granderath K."/>
            <person name="Dauner D."/>
            <person name="Herzl A."/>
            <person name="Neumann S."/>
            <person name="Argiriou A."/>
            <person name="Vitale D."/>
            <person name="Liguori R."/>
            <person name="Piravandi E."/>
            <person name="Massenet O."/>
            <person name="Quigley F."/>
            <person name="Clabauld G."/>
            <person name="Muendlein A."/>
            <person name="Felber R."/>
            <person name="Schnabl S."/>
            <person name="Hiller R."/>
            <person name="Schmidt W."/>
            <person name="Lecharny A."/>
            <person name="Aubourg S."/>
            <person name="Chefdor F."/>
            <person name="Cooke R."/>
            <person name="Berger C."/>
            <person name="Monfort A."/>
            <person name="Casacuberta E."/>
            <person name="Gibbons T."/>
            <person name="Weber N."/>
            <person name="Vandenbol M."/>
            <person name="Bargues M."/>
            <person name="Terol J."/>
            <person name="Torres A."/>
            <person name="Perez-Perez A."/>
            <person name="Purnelle B."/>
            <person name="Bent E."/>
            <person name="Johnson S."/>
            <person name="Tacon D."/>
            <person name="Jesse T."/>
            <person name="Heijnen L."/>
            <person name="Schwarz S."/>
            <person name="Scholler P."/>
            <person name="Heber S."/>
            <person name="Francs P."/>
            <person name="Bielke C."/>
            <person name="Frishman D."/>
            <person name="Haase D."/>
            <person name="Lemcke K."/>
            <person name="Mewes H.-W."/>
            <person name="Stocker S."/>
            <person name="Zaccaria P."/>
            <person name="Bevan M."/>
            <person name="Wilson R.K."/>
            <person name="de la Bastide M."/>
            <person name="Habermann K."/>
            <person name="Parnell L."/>
            <person name="Dedhia N."/>
            <person name="Gnoj L."/>
            <person name="Schutz K."/>
            <person name="Huang E."/>
            <person name="Spiegel L."/>
            <person name="Sekhon M."/>
            <person name="Murray J."/>
            <person name="Sheet P."/>
            <person name="Cordes M."/>
            <person name="Abu-Threideh J."/>
            <person name="Stoneking T."/>
            <person name="Kalicki J."/>
            <person name="Graves T."/>
            <person name="Harmon G."/>
            <person name="Edwards J."/>
            <person name="Latreille P."/>
            <person name="Courtney L."/>
            <person name="Cloud J."/>
            <person name="Abbott A."/>
            <person name="Scott K."/>
            <person name="Johnson D."/>
            <person name="Minx P."/>
            <person name="Bentley D."/>
            <person name="Fulton B."/>
            <person name="Miller N."/>
            <person name="Greco T."/>
            <person name="Kemp K."/>
            <person name="Kramer J."/>
            <person name="Fulton L."/>
            <person name="Mardis E."/>
            <person name="Dante M."/>
            <person name="Pepin K."/>
            <person name="Hillier L.W."/>
            <person name="Nelson J."/>
            <person name="Spieth J."/>
            <person name="Ryan E."/>
            <person name="Andrews S."/>
            <person name="Geisel C."/>
            <person name="Layman D."/>
            <person name="Du H."/>
            <person name="Ali J."/>
            <person name="Berghoff A."/>
            <person name="Jones K."/>
            <person name="Drone K."/>
            <person name="Cotton M."/>
            <person name="Joshu C."/>
            <person name="Antonoiu B."/>
            <person name="Zidanic M."/>
            <person name="Strong C."/>
            <person name="Sun H."/>
            <person name="Lamar B."/>
            <person name="Yordan C."/>
            <person name="Ma P."/>
            <person name="Zhong J."/>
            <person name="Preston R."/>
            <person name="Vil D."/>
            <person name="Shekher M."/>
            <person name="Matero A."/>
            <person name="Shah R."/>
            <person name="Swaby I.K."/>
            <person name="O'Shaughnessy A."/>
            <person name="Rodriguez M."/>
            <person name="Hoffman J."/>
            <person name="Till S."/>
            <person name="Granat S."/>
            <person name="Shohdy N."/>
            <person name="Hasegawa A."/>
            <person name="Hameed A."/>
            <person name="Lodhi M."/>
            <person name="Johnson A."/>
            <person name="Chen E."/>
            <person name="Marra M.A."/>
            <person name="Martienssen R."/>
            <person name="McCombie W.R."/>
        </authorList>
    </citation>
    <scope>NUCLEOTIDE SEQUENCE [LARGE SCALE GENOMIC DNA]</scope>
    <source>
        <strain>cv. Columbia</strain>
    </source>
</reference>
<reference key="2">
    <citation type="journal article" date="2017" name="Plant J.">
        <title>Araport11: a complete reannotation of the Arabidopsis thaliana reference genome.</title>
        <authorList>
            <person name="Cheng C.Y."/>
            <person name="Krishnakumar V."/>
            <person name="Chan A.P."/>
            <person name="Thibaud-Nissen F."/>
            <person name="Schobel S."/>
            <person name="Town C.D."/>
        </authorList>
    </citation>
    <scope>GENOME REANNOTATION</scope>
    <source>
        <strain>cv. Columbia</strain>
    </source>
</reference>
<reference key="3">
    <citation type="journal article" date="2002" name="Gene">
        <title>Analysis and expression of the class III peroxidase large gene family in Arabidopsis thaliana.</title>
        <authorList>
            <person name="Tognolli M."/>
            <person name="Penel C."/>
            <person name="Greppin H."/>
            <person name="Simon P."/>
        </authorList>
    </citation>
    <scope>GENE FAMILY ORGANIZATION</scope>
    <scope>NOMENCLATURE</scope>
    <source>
        <strain>cv. Columbia</strain>
    </source>
</reference>
<feature type="signal peptide" evidence="2">
    <location>
        <begin position="1"/>
        <end position="22"/>
    </location>
</feature>
<feature type="chain" id="PRO_0000023704" description="Peroxidase 38">
    <location>
        <begin position="23"/>
        <end position="346"/>
    </location>
</feature>
<feature type="active site" description="Proton acceptor" evidence="3 4">
    <location>
        <position position="64"/>
    </location>
</feature>
<feature type="binding site" evidence="3">
    <location>
        <position position="65"/>
    </location>
    <ligand>
        <name>Ca(2+)</name>
        <dbReference type="ChEBI" id="CHEBI:29108"/>
        <label>1</label>
    </ligand>
</feature>
<feature type="binding site" evidence="3">
    <location>
        <position position="68"/>
    </location>
    <ligand>
        <name>Ca(2+)</name>
        <dbReference type="ChEBI" id="CHEBI:29108"/>
        <label>1</label>
    </ligand>
</feature>
<feature type="binding site" evidence="3">
    <location>
        <position position="70"/>
    </location>
    <ligand>
        <name>Ca(2+)</name>
        <dbReference type="ChEBI" id="CHEBI:29108"/>
        <label>1</label>
    </ligand>
</feature>
<feature type="binding site" evidence="3">
    <location>
        <position position="72"/>
    </location>
    <ligand>
        <name>Ca(2+)</name>
        <dbReference type="ChEBI" id="CHEBI:29108"/>
        <label>1</label>
    </ligand>
</feature>
<feature type="binding site" evidence="3">
    <location>
        <position position="74"/>
    </location>
    <ligand>
        <name>Ca(2+)</name>
        <dbReference type="ChEBI" id="CHEBI:29108"/>
        <label>1</label>
    </ligand>
</feature>
<feature type="binding site" evidence="3">
    <location>
        <position position="161"/>
    </location>
    <ligand>
        <name>substrate</name>
    </ligand>
</feature>
<feature type="binding site" description="axial binding residue" evidence="3">
    <location>
        <position position="192"/>
    </location>
    <ligand>
        <name>heme b</name>
        <dbReference type="ChEBI" id="CHEBI:60344"/>
    </ligand>
    <ligandPart>
        <name>Fe</name>
        <dbReference type="ChEBI" id="CHEBI:18248"/>
    </ligandPart>
</feature>
<feature type="binding site" evidence="3">
    <location>
        <position position="193"/>
    </location>
    <ligand>
        <name>Ca(2+)</name>
        <dbReference type="ChEBI" id="CHEBI:29108"/>
        <label>2</label>
    </ligand>
</feature>
<feature type="binding site" evidence="3">
    <location>
        <position position="244"/>
    </location>
    <ligand>
        <name>Ca(2+)</name>
        <dbReference type="ChEBI" id="CHEBI:29108"/>
        <label>2</label>
    </ligand>
</feature>
<feature type="binding site" evidence="3">
    <location>
        <position position="247"/>
    </location>
    <ligand>
        <name>Ca(2+)</name>
        <dbReference type="ChEBI" id="CHEBI:29108"/>
        <label>2</label>
    </ligand>
</feature>
<feature type="binding site" evidence="3">
    <location>
        <position position="252"/>
    </location>
    <ligand>
        <name>Ca(2+)</name>
        <dbReference type="ChEBI" id="CHEBI:29108"/>
        <label>2</label>
    </ligand>
</feature>
<feature type="site" description="Transition state stabilizer" evidence="3">
    <location>
        <position position="60"/>
    </location>
</feature>
<feature type="modified residue" description="Pyrrolidone carboxylic acid" evidence="1 3">
    <location>
        <position position="23"/>
    </location>
</feature>
<feature type="glycosylation site" description="N-linked (GlcNAc...) asparagine" evidence="2">
    <location>
        <position position="79"/>
    </location>
</feature>
<feature type="glycosylation site" description="N-linked (GlcNAc...) asparagine" evidence="2">
    <location>
        <position position="236"/>
    </location>
</feature>
<feature type="disulfide bond" evidence="3">
    <location>
        <begin position="33"/>
        <end position="113"/>
    </location>
</feature>
<feature type="disulfide bond" evidence="3">
    <location>
        <begin position="66"/>
        <end position="71"/>
    </location>
</feature>
<feature type="disulfide bond" evidence="3">
    <location>
        <begin position="119"/>
        <end position="323"/>
    </location>
</feature>
<feature type="disulfide bond" evidence="3">
    <location>
        <begin position="199"/>
        <end position="231"/>
    </location>
</feature>
<organism>
    <name type="scientific">Arabidopsis thaliana</name>
    <name type="common">Mouse-ear cress</name>
    <dbReference type="NCBI Taxonomy" id="3702"/>
    <lineage>
        <taxon>Eukaryota</taxon>
        <taxon>Viridiplantae</taxon>
        <taxon>Streptophyta</taxon>
        <taxon>Embryophyta</taxon>
        <taxon>Tracheophyta</taxon>
        <taxon>Spermatophyta</taxon>
        <taxon>Magnoliopsida</taxon>
        <taxon>eudicotyledons</taxon>
        <taxon>Gunneridae</taxon>
        <taxon>Pentapetalae</taxon>
        <taxon>rosids</taxon>
        <taxon>malvids</taxon>
        <taxon>Brassicales</taxon>
        <taxon>Brassicaceae</taxon>
        <taxon>Camelineae</taxon>
        <taxon>Arabidopsis</taxon>
    </lineage>
</organism>
<accession>Q9LDA4</accession>
<comment type="function">
    <text>Removal of H(2)O(2), oxidation of toxic reductants, biosynthesis and degradation of lignin, suberization, auxin catabolism, response to environmental stresses such as wounding, pathogen attack and oxidative stress. These functions might be dependent on each isozyme/isoform in each plant tissue.</text>
</comment>
<comment type="catalytic activity">
    <reaction>
        <text>2 a phenolic donor + H2O2 = 2 a phenolic radical donor + 2 H2O</text>
        <dbReference type="Rhea" id="RHEA:56136"/>
        <dbReference type="ChEBI" id="CHEBI:15377"/>
        <dbReference type="ChEBI" id="CHEBI:16240"/>
        <dbReference type="ChEBI" id="CHEBI:139520"/>
        <dbReference type="ChEBI" id="CHEBI:139521"/>
        <dbReference type="EC" id="1.11.1.7"/>
    </reaction>
</comment>
<comment type="cofactor">
    <cofactor evidence="3">
        <name>heme b</name>
        <dbReference type="ChEBI" id="CHEBI:60344"/>
    </cofactor>
    <text evidence="3">Binds 1 heme b (iron(II)-protoporphyrin IX) group per subunit.</text>
</comment>
<comment type="cofactor">
    <cofactor evidence="3">
        <name>Ca(2+)</name>
        <dbReference type="ChEBI" id="CHEBI:29108"/>
    </cofactor>
    <text evidence="3">Binds 2 calcium ions per subunit.</text>
</comment>
<comment type="subcellular location">
    <subcellularLocation>
        <location evidence="5">Secreted</location>
    </subcellularLocation>
    <subcellularLocation>
        <location evidence="5">Vacuole</location>
    </subcellularLocation>
    <text>Carboxy-terminal extension appears to target the protein to vacuoles.</text>
</comment>
<comment type="miscellaneous">
    <text>There are 73 peroxidase genes in A.thaliana.</text>
</comment>
<comment type="similarity">
    <text evidence="3">Belongs to the peroxidase family. Classical plant (class III) peroxidase subfamily.</text>
</comment>
<sequence length="346" mass="38086">MHSSLIKLGFLLLLLQVSLSHAQLSPSFYDKTCPQVFDIVTNTIVNALRSDPRIAASILRLHFHDCFVNGCDASILLDNTTSFRTEKDAFGNANSARGFDVIDKMKAAIEKACPRTVSCADMLAIAAKESIVLAGGPSWMVPNGRRDSLRGFMDLANDNLPGPSSTLKQLKDRFKNVGLDRSSDLVALSGGHTFGKSQCQFIMDRLYNFGETGLPDPTLDKSYLATLRKQCPRNGNQSVLVDFDLRTPTLFDNKYYVNLKENKGLIQSDQELFSSPDAADTLPLVRAYADGQGTFFDAFVKAIIRMSSLSPLTGKQGEIRLNCRVVNSKSKIMDVVDDALEFASFM</sequence>